<reference key="1">
    <citation type="submission" date="2007-02" db="EMBL/GenBank/DDBJ databases">
        <title>Complete sequence of Mycobacterium sp. JLS.</title>
        <authorList>
            <consortium name="US DOE Joint Genome Institute"/>
            <person name="Copeland A."/>
            <person name="Lucas S."/>
            <person name="Lapidus A."/>
            <person name="Barry K."/>
            <person name="Detter J.C."/>
            <person name="Glavina del Rio T."/>
            <person name="Hammon N."/>
            <person name="Israni S."/>
            <person name="Dalin E."/>
            <person name="Tice H."/>
            <person name="Pitluck S."/>
            <person name="Chain P."/>
            <person name="Malfatti S."/>
            <person name="Shin M."/>
            <person name="Vergez L."/>
            <person name="Schmutz J."/>
            <person name="Larimer F."/>
            <person name="Land M."/>
            <person name="Hauser L."/>
            <person name="Kyrpides N."/>
            <person name="Mikhailova N."/>
            <person name="Miller C.D."/>
            <person name="Anderson A.J."/>
            <person name="Sims R.C."/>
            <person name="Richardson P."/>
        </authorList>
    </citation>
    <scope>NUCLEOTIDE SEQUENCE [LARGE SCALE GENOMIC DNA]</scope>
    <source>
        <strain>JLS</strain>
    </source>
</reference>
<comment type="function">
    <text evidence="1">Na(+)/H(+) antiporter that extrudes sodium in exchange for external protons.</text>
</comment>
<comment type="catalytic activity">
    <reaction evidence="1">
        <text>Na(+)(in) + 2 H(+)(out) = Na(+)(out) + 2 H(+)(in)</text>
        <dbReference type="Rhea" id="RHEA:29251"/>
        <dbReference type="ChEBI" id="CHEBI:15378"/>
        <dbReference type="ChEBI" id="CHEBI:29101"/>
    </reaction>
    <physiologicalReaction direction="left-to-right" evidence="1">
        <dbReference type="Rhea" id="RHEA:29252"/>
    </physiologicalReaction>
</comment>
<comment type="subcellular location">
    <subcellularLocation>
        <location evidence="1">Cell membrane</location>
        <topology evidence="1">Multi-pass membrane protein</topology>
    </subcellularLocation>
</comment>
<comment type="similarity">
    <text evidence="3">In the N-terminal section; belongs to the NhaA Na(+)/H(+) (TC 2.A.33) antiporter family.</text>
</comment>
<accession>A3PTR0</accession>
<organism>
    <name type="scientific">Mycobacterium sp. (strain JLS)</name>
    <dbReference type="NCBI Taxonomy" id="164757"/>
    <lineage>
        <taxon>Bacteria</taxon>
        <taxon>Bacillati</taxon>
        <taxon>Actinomycetota</taxon>
        <taxon>Actinomycetes</taxon>
        <taxon>Mycobacteriales</taxon>
        <taxon>Mycobacteriaceae</taxon>
        <taxon>Mycobacterium</taxon>
    </lineage>
</organism>
<proteinExistence type="inferred from homology"/>
<name>NHAA1_MYCSJ</name>
<dbReference type="EMBL" id="CP000580">
    <property type="protein sequence ID" value="ABN96287.1"/>
    <property type="molecule type" value="Genomic_DNA"/>
</dbReference>
<dbReference type="SMR" id="A3PTR0"/>
<dbReference type="KEGG" id="mjl:Mjls_0475"/>
<dbReference type="HOGENOM" id="CLU_015803_3_0_11"/>
<dbReference type="BioCyc" id="MSP164757:G1G8C-482-MONOMER"/>
<dbReference type="GO" id="GO:0005886">
    <property type="term" value="C:plasma membrane"/>
    <property type="evidence" value="ECO:0007669"/>
    <property type="project" value="UniProtKB-SubCell"/>
</dbReference>
<dbReference type="GO" id="GO:0016491">
    <property type="term" value="F:oxidoreductase activity"/>
    <property type="evidence" value="ECO:0007669"/>
    <property type="project" value="UniProtKB-ARBA"/>
</dbReference>
<dbReference type="GO" id="GO:0015385">
    <property type="term" value="F:sodium:proton antiporter activity"/>
    <property type="evidence" value="ECO:0007669"/>
    <property type="project" value="TreeGrafter"/>
</dbReference>
<dbReference type="GO" id="GO:0006885">
    <property type="term" value="P:regulation of pH"/>
    <property type="evidence" value="ECO:0007669"/>
    <property type="project" value="InterPro"/>
</dbReference>
<dbReference type="Gene3D" id="3.40.30.10">
    <property type="entry name" value="Glutaredoxin"/>
    <property type="match status" value="1"/>
</dbReference>
<dbReference type="Gene3D" id="1.20.1530.10">
    <property type="entry name" value="Na+/H+ antiporter like domain"/>
    <property type="match status" value="1"/>
</dbReference>
<dbReference type="HAMAP" id="MF_01844">
    <property type="entry name" value="NhaA"/>
    <property type="match status" value="1"/>
</dbReference>
<dbReference type="InterPro" id="IPR023171">
    <property type="entry name" value="Na/H_antiporter_dom_sf"/>
</dbReference>
<dbReference type="InterPro" id="IPR004670">
    <property type="entry name" value="NhaA"/>
</dbReference>
<dbReference type="InterPro" id="IPR012336">
    <property type="entry name" value="Thioredoxin-like_fold"/>
</dbReference>
<dbReference type="InterPro" id="IPR036249">
    <property type="entry name" value="Thioredoxin-like_sf"/>
</dbReference>
<dbReference type="InterPro" id="IPR013766">
    <property type="entry name" value="Thioredoxin_domain"/>
</dbReference>
<dbReference type="NCBIfam" id="TIGR00773">
    <property type="entry name" value="NhaA"/>
    <property type="match status" value="1"/>
</dbReference>
<dbReference type="PANTHER" id="PTHR30341:SF0">
    <property type="entry name" value="NA(+)_H(+) ANTIPORTER NHAA"/>
    <property type="match status" value="1"/>
</dbReference>
<dbReference type="PANTHER" id="PTHR30341">
    <property type="entry name" value="SODIUM ION/PROTON ANTIPORTER NHAA-RELATED"/>
    <property type="match status" value="1"/>
</dbReference>
<dbReference type="Pfam" id="PF06965">
    <property type="entry name" value="Na_H_antiport_1"/>
    <property type="match status" value="1"/>
</dbReference>
<dbReference type="Pfam" id="PF13462">
    <property type="entry name" value="Thioredoxin_4"/>
    <property type="match status" value="1"/>
</dbReference>
<dbReference type="SUPFAM" id="SSF52833">
    <property type="entry name" value="Thioredoxin-like"/>
    <property type="match status" value="1"/>
</dbReference>
<dbReference type="PROSITE" id="PS51352">
    <property type="entry name" value="THIOREDOXIN_2"/>
    <property type="match status" value="1"/>
</dbReference>
<keyword id="KW-0050">Antiport</keyword>
<keyword id="KW-1003">Cell membrane</keyword>
<keyword id="KW-0406">Ion transport</keyword>
<keyword id="KW-0472">Membrane</keyword>
<keyword id="KW-0915">Sodium</keyword>
<keyword id="KW-0739">Sodium transport</keyword>
<keyword id="KW-0812">Transmembrane</keyword>
<keyword id="KW-1133">Transmembrane helix</keyword>
<keyword id="KW-0813">Transport</keyword>
<feature type="chain" id="PRO_0000334479" description="Na(+)/H(+) antiporter NhaA 1">
    <location>
        <begin position="1"/>
        <end position="613"/>
    </location>
</feature>
<feature type="transmembrane region" description="Helical" evidence="1">
    <location>
        <begin position="29"/>
        <end position="49"/>
    </location>
</feature>
<feature type="transmembrane region" description="Helical" evidence="1">
    <location>
        <begin position="81"/>
        <end position="101"/>
    </location>
</feature>
<feature type="transmembrane region" description="Helical" evidence="1">
    <location>
        <begin position="110"/>
        <end position="130"/>
    </location>
</feature>
<feature type="transmembrane region" description="Helical" evidence="1">
    <location>
        <begin position="138"/>
        <end position="158"/>
    </location>
</feature>
<feature type="transmembrane region" description="Helical" evidence="1">
    <location>
        <begin position="168"/>
        <end position="188"/>
    </location>
</feature>
<feature type="transmembrane region" description="Helical" evidence="1">
    <location>
        <begin position="191"/>
        <end position="211"/>
    </location>
</feature>
<feature type="transmembrane region" description="Helical" evidence="1">
    <location>
        <begin position="231"/>
        <end position="251"/>
    </location>
</feature>
<feature type="transmembrane region" description="Helical" evidence="1">
    <location>
        <begin position="300"/>
        <end position="320"/>
    </location>
</feature>
<feature type="transmembrane region" description="Helical" evidence="1">
    <location>
        <begin position="337"/>
        <end position="357"/>
    </location>
</feature>
<feature type="transmembrane region" description="Helical" evidence="1">
    <location>
        <begin position="377"/>
        <end position="397"/>
    </location>
</feature>
<feature type="transmembrane region" description="Helical" evidence="1">
    <location>
        <begin position="408"/>
        <end position="428"/>
    </location>
</feature>
<feature type="domain" description="Thioredoxin">
    <location>
        <begin position="409"/>
        <end position="613"/>
    </location>
</feature>
<feature type="region of interest" description="Na(+)/H(+) antiporter NhaA">
    <location>
        <begin position="1"/>
        <end position="408"/>
    </location>
</feature>
<feature type="region of interest" description="Disordered" evidence="2">
    <location>
        <begin position="1"/>
        <end position="24"/>
    </location>
</feature>
<evidence type="ECO:0000255" key="1">
    <source>
        <dbReference type="HAMAP-Rule" id="MF_01844"/>
    </source>
</evidence>
<evidence type="ECO:0000256" key="2">
    <source>
        <dbReference type="SAM" id="MobiDB-lite"/>
    </source>
</evidence>
<evidence type="ECO:0000305" key="3"/>
<sequence length="613" mass="66445">MTEASARTIGPLPSRFSRDPKTPRSTDNAAAALLLAFTVLAILWANSPWAQSYSTFWDTHVAVSFGEYRAELSVKHLVNDGLMAFFFFIVGLEVKSEFVIGELTDRSRAAVPVVAAIAGLIVPAVIFLTFNPSGPDAQAWGVVISTDTAFLVGALAVIKPKFPARLRIFLLTLAVVDDVGALGAIALFYTDDLKLAPLAVAALLIAALAMVRRLPSLRGPAYAVLGFALWIALYLAHVHPTLAGVAVAVLIPVFTPERRQVEQTVDLVRAFRQSPNPQYARAVTRGLRESISINERLQTAVGPYVSFVVLPIFALANAGVHLDEQTITAAMSSTLTWGIVAGLVVGKFVGITAATALMSATGWGQLAPGLSLRRVAGGAALSGIGFTISLFIVDVAIEDPARQDEARVGVLIASVLAFTLSWALFRITDWISPPEPVGLTLVRPVDPERDHIRGDPDAPLVLVEYGDYECPFCGRATGAIDEVRTHFGDDLLYVWRHFPLERAHPRSFDAARASEGAAAQGKFFEMGRELFAHQDDLEWSDMYRYAVAIGLDIEQFDQDVRVHASKVLHRVRDDAQDAEVMDLNSTPTFFVNGKRHKGPWDAASLIRALEAGR</sequence>
<gene>
    <name evidence="1" type="primary">nhaA1</name>
    <name type="ordered locus">Mjls_0475</name>
</gene>
<protein>
    <recommendedName>
        <fullName evidence="1">Na(+)/H(+) antiporter NhaA 1</fullName>
    </recommendedName>
    <alternativeName>
        <fullName evidence="1">Sodium/proton antiporter NhaA 1</fullName>
    </alternativeName>
</protein>